<sequence>MMSSPIPHQQTIAAVATAVAPGQGGIAVVRLSGPAAEVVGRSVVSIPGQQLWVSHRVLYGHVMDESGKERIDEVLVLLMKGPRSFTGEDVVEIHCHGGLMAVQRVLERVLAQPHVRRALPGEFSQRAVLNGRLDLTQAEAISELVAARSRRAAQLAMTGVDGGIQRRITSLRERLLDQLSELEARVDFEEDLPPLDAAELLLELQCVRRELEQLVEDAKRGDVLRQGLQVALVGRPNVGKSSLLNRLSRRERAIVTDLPGTTRDVLESEIVLEGVPITLVDTAGIRATKDALEQLGIDRSHQALAAADVAVLVFDLSLGWTADDAALLAQIPDDLPRLLVGNKADLQPASMTASLSNEVDGKTVDVMLSALTGQGEEALIEAVLKTCGASEAQGLVVALNQRQQDLAATAAIALARTQEAAAQKLPWDFWTIDLRQAISSLGEITGEEITEAVLDRIFSRFCIGK</sequence>
<dbReference type="EC" id="3.6.-.-" evidence="1"/>
<dbReference type="EMBL" id="CP000554">
    <property type="protein sequence ID" value="ABM79484.1"/>
    <property type="molecule type" value="Genomic_DNA"/>
</dbReference>
<dbReference type="RefSeq" id="WP_011827327.1">
    <property type="nucleotide sequence ID" value="NC_008820.1"/>
</dbReference>
<dbReference type="SMR" id="A2CDC4"/>
<dbReference type="STRING" id="59922.P9303_27541"/>
<dbReference type="KEGG" id="pmf:P9303_27541"/>
<dbReference type="HOGENOM" id="CLU_019624_4_1_3"/>
<dbReference type="Proteomes" id="UP000002274">
    <property type="component" value="Chromosome"/>
</dbReference>
<dbReference type="GO" id="GO:0005829">
    <property type="term" value="C:cytosol"/>
    <property type="evidence" value="ECO:0007669"/>
    <property type="project" value="TreeGrafter"/>
</dbReference>
<dbReference type="GO" id="GO:0005525">
    <property type="term" value="F:GTP binding"/>
    <property type="evidence" value="ECO:0007669"/>
    <property type="project" value="UniProtKB-UniRule"/>
</dbReference>
<dbReference type="GO" id="GO:0003924">
    <property type="term" value="F:GTPase activity"/>
    <property type="evidence" value="ECO:0007669"/>
    <property type="project" value="UniProtKB-UniRule"/>
</dbReference>
<dbReference type="GO" id="GO:0046872">
    <property type="term" value="F:metal ion binding"/>
    <property type="evidence" value="ECO:0007669"/>
    <property type="project" value="UniProtKB-KW"/>
</dbReference>
<dbReference type="GO" id="GO:0030488">
    <property type="term" value="P:tRNA methylation"/>
    <property type="evidence" value="ECO:0007669"/>
    <property type="project" value="TreeGrafter"/>
</dbReference>
<dbReference type="GO" id="GO:0002098">
    <property type="term" value="P:tRNA wobble uridine modification"/>
    <property type="evidence" value="ECO:0007669"/>
    <property type="project" value="TreeGrafter"/>
</dbReference>
<dbReference type="CDD" id="cd04164">
    <property type="entry name" value="trmE"/>
    <property type="match status" value="1"/>
</dbReference>
<dbReference type="CDD" id="cd14858">
    <property type="entry name" value="TrmE_N"/>
    <property type="match status" value="1"/>
</dbReference>
<dbReference type="Gene3D" id="3.40.50.300">
    <property type="entry name" value="P-loop containing nucleotide triphosphate hydrolases"/>
    <property type="match status" value="1"/>
</dbReference>
<dbReference type="Gene3D" id="3.30.1360.120">
    <property type="entry name" value="Probable tRNA modification gtpase trme, domain 1"/>
    <property type="match status" value="1"/>
</dbReference>
<dbReference type="Gene3D" id="1.20.120.430">
    <property type="entry name" value="tRNA modification GTPase MnmE domain 2"/>
    <property type="match status" value="1"/>
</dbReference>
<dbReference type="HAMAP" id="MF_00379">
    <property type="entry name" value="GTPase_MnmE"/>
    <property type="match status" value="1"/>
</dbReference>
<dbReference type="InterPro" id="IPR031168">
    <property type="entry name" value="G_TrmE"/>
</dbReference>
<dbReference type="InterPro" id="IPR006073">
    <property type="entry name" value="GTP-bd"/>
</dbReference>
<dbReference type="InterPro" id="IPR018948">
    <property type="entry name" value="GTP-bd_TrmE_N"/>
</dbReference>
<dbReference type="InterPro" id="IPR004520">
    <property type="entry name" value="GTPase_MnmE"/>
</dbReference>
<dbReference type="InterPro" id="IPR027368">
    <property type="entry name" value="MnmE_dom2"/>
</dbReference>
<dbReference type="InterPro" id="IPR025867">
    <property type="entry name" value="MnmE_helical"/>
</dbReference>
<dbReference type="InterPro" id="IPR027417">
    <property type="entry name" value="P-loop_NTPase"/>
</dbReference>
<dbReference type="InterPro" id="IPR005225">
    <property type="entry name" value="Small_GTP-bd"/>
</dbReference>
<dbReference type="InterPro" id="IPR027266">
    <property type="entry name" value="TrmE/GcvT_dom1"/>
</dbReference>
<dbReference type="NCBIfam" id="TIGR00450">
    <property type="entry name" value="mnmE_trmE_thdF"/>
    <property type="match status" value="1"/>
</dbReference>
<dbReference type="NCBIfam" id="NF003661">
    <property type="entry name" value="PRK05291.1-3"/>
    <property type="match status" value="1"/>
</dbReference>
<dbReference type="NCBIfam" id="TIGR00231">
    <property type="entry name" value="small_GTP"/>
    <property type="match status" value="1"/>
</dbReference>
<dbReference type="PANTHER" id="PTHR42714">
    <property type="entry name" value="TRNA MODIFICATION GTPASE GTPBP3"/>
    <property type="match status" value="1"/>
</dbReference>
<dbReference type="PANTHER" id="PTHR42714:SF2">
    <property type="entry name" value="TRNA MODIFICATION GTPASE GTPBP3, MITOCHONDRIAL"/>
    <property type="match status" value="1"/>
</dbReference>
<dbReference type="Pfam" id="PF01926">
    <property type="entry name" value="MMR_HSR1"/>
    <property type="match status" value="1"/>
</dbReference>
<dbReference type="Pfam" id="PF12631">
    <property type="entry name" value="MnmE_helical"/>
    <property type="match status" value="1"/>
</dbReference>
<dbReference type="Pfam" id="PF10396">
    <property type="entry name" value="TrmE_N"/>
    <property type="match status" value="1"/>
</dbReference>
<dbReference type="PRINTS" id="PR00449">
    <property type="entry name" value="RASTRNSFRMNG"/>
</dbReference>
<dbReference type="SUPFAM" id="SSF52540">
    <property type="entry name" value="P-loop containing nucleoside triphosphate hydrolases"/>
    <property type="match status" value="1"/>
</dbReference>
<dbReference type="PROSITE" id="PS51709">
    <property type="entry name" value="G_TRME"/>
    <property type="match status" value="1"/>
</dbReference>
<evidence type="ECO:0000255" key="1">
    <source>
        <dbReference type="HAMAP-Rule" id="MF_00379"/>
    </source>
</evidence>
<name>MNME_PROM3</name>
<protein>
    <recommendedName>
        <fullName evidence="1">tRNA modification GTPase MnmE</fullName>
        <ecNumber evidence="1">3.6.-.-</ecNumber>
    </recommendedName>
</protein>
<feature type="chain" id="PRO_1000048847" description="tRNA modification GTPase MnmE">
    <location>
        <begin position="1"/>
        <end position="465"/>
    </location>
</feature>
<feature type="domain" description="TrmE-type G">
    <location>
        <begin position="227"/>
        <end position="388"/>
    </location>
</feature>
<feature type="binding site" evidence="1">
    <location>
        <position position="30"/>
    </location>
    <ligand>
        <name>(6S)-5-formyl-5,6,7,8-tetrahydrofolate</name>
        <dbReference type="ChEBI" id="CHEBI:57457"/>
    </ligand>
</feature>
<feature type="binding site" evidence="1">
    <location>
        <position position="92"/>
    </location>
    <ligand>
        <name>(6S)-5-formyl-5,6,7,8-tetrahydrofolate</name>
        <dbReference type="ChEBI" id="CHEBI:57457"/>
    </ligand>
</feature>
<feature type="binding site" evidence="1">
    <location>
        <position position="132"/>
    </location>
    <ligand>
        <name>(6S)-5-formyl-5,6,7,8-tetrahydrofolate</name>
        <dbReference type="ChEBI" id="CHEBI:57457"/>
    </ligand>
</feature>
<feature type="binding site" evidence="1">
    <location>
        <begin position="237"/>
        <end position="242"/>
    </location>
    <ligand>
        <name>GTP</name>
        <dbReference type="ChEBI" id="CHEBI:37565"/>
    </ligand>
</feature>
<feature type="binding site" evidence="1">
    <location>
        <position position="237"/>
    </location>
    <ligand>
        <name>K(+)</name>
        <dbReference type="ChEBI" id="CHEBI:29103"/>
    </ligand>
</feature>
<feature type="binding site" evidence="1">
    <location>
        <position position="241"/>
    </location>
    <ligand>
        <name>Mg(2+)</name>
        <dbReference type="ChEBI" id="CHEBI:18420"/>
    </ligand>
</feature>
<feature type="binding site" evidence="1">
    <location>
        <begin position="256"/>
        <end position="262"/>
    </location>
    <ligand>
        <name>GTP</name>
        <dbReference type="ChEBI" id="CHEBI:37565"/>
    </ligand>
</feature>
<feature type="binding site" evidence="1">
    <location>
        <position position="256"/>
    </location>
    <ligand>
        <name>K(+)</name>
        <dbReference type="ChEBI" id="CHEBI:29103"/>
    </ligand>
</feature>
<feature type="binding site" evidence="1">
    <location>
        <position position="258"/>
    </location>
    <ligand>
        <name>K(+)</name>
        <dbReference type="ChEBI" id="CHEBI:29103"/>
    </ligand>
</feature>
<feature type="binding site" evidence="1">
    <location>
        <position position="261"/>
    </location>
    <ligand>
        <name>K(+)</name>
        <dbReference type="ChEBI" id="CHEBI:29103"/>
    </ligand>
</feature>
<feature type="binding site" evidence="1">
    <location>
        <position position="262"/>
    </location>
    <ligand>
        <name>Mg(2+)</name>
        <dbReference type="ChEBI" id="CHEBI:18420"/>
    </ligand>
</feature>
<feature type="binding site" evidence="1">
    <location>
        <begin position="281"/>
        <end position="284"/>
    </location>
    <ligand>
        <name>GTP</name>
        <dbReference type="ChEBI" id="CHEBI:37565"/>
    </ligand>
</feature>
<feature type="binding site" evidence="1">
    <location>
        <begin position="342"/>
        <end position="345"/>
    </location>
    <ligand>
        <name>GTP</name>
        <dbReference type="ChEBI" id="CHEBI:37565"/>
    </ligand>
</feature>
<feature type="binding site" evidence="1">
    <location>
        <position position="465"/>
    </location>
    <ligand>
        <name>(6S)-5-formyl-5,6,7,8-tetrahydrofolate</name>
        <dbReference type="ChEBI" id="CHEBI:57457"/>
    </ligand>
</feature>
<accession>A2CDC4</accession>
<keyword id="KW-0963">Cytoplasm</keyword>
<keyword id="KW-0342">GTP-binding</keyword>
<keyword id="KW-0378">Hydrolase</keyword>
<keyword id="KW-0460">Magnesium</keyword>
<keyword id="KW-0479">Metal-binding</keyword>
<keyword id="KW-0547">Nucleotide-binding</keyword>
<keyword id="KW-0630">Potassium</keyword>
<keyword id="KW-0819">tRNA processing</keyword>
<reference key="1">
    <citation type="journal article" date="2007" name="PLoS Genet.">
        <title>Patterns and implications of gene gain and loss in the evolution of Prochlorococcus.</title>
        <authorList>
            <person name="Kettler G.C."/>
            <person name="Martiny A.C."/>
            <person name="Huang K."/>
            <person name="Zucker J."/>
            <person name="Coleman M.L."/>
            <person name="Rodrigue S."/>
            <person name="Chen F."/>
            <person name="Lapidus A."/>
            <person name="Ferriera S."/>
            <person name="Johnson J."/>
            <person name="Steglich C."/>
            <person name="Church G.M."/>
            <person name="Richardson P."/>
            <person name="Chisholm S.W."/>
        </authorList>
    </citation>
    <scope>NUCLEOTIDE SEQUENCE [LARGE SCALE GENOMIC DNA]</scope>
    <source>
        <strain>MIT 9303</strain>
    </source>
</reference>
<gene>
    <name evidence="1" type="primary">mnmE</name>
    <name evidence="1" type="synonym">trmE</name>
    <name type="ordered locus">P9303_27541</name>
</gene>
<proteinExistence type="inferred from homology"/>
<organism>
    <name type="scientific">Prochlorococcus marinus (strain MIT 9303)</name>
    <dbReference type="NCBI Taxonomy" id="59922"/>
    <lineage>
        <taxon>Bacteria</taxon>
        <taxon>Bacillati</taxon>
        <taxon>Cyanobacteriota</taxon>
        <taxon>Cyanophyceae</taxon>
        <taxon>Synechococcales</taxon>
        <taxon>Prochlorococcaceae</taxon>
        <taxon>Prochlorococcus</taxon>
    </lineage>
</organism>
<comment type="function">
    <text evidence="1">Exhibits a very high intrinsic GTPase hydrolysis rate. Involved in the addition of a carboxymethylaminomethyl (cmnm) group at the wobble position (U34) of certain tRNAs, forming tRNA-cmnm(5)s(2)U34.</text>
</comment>
<comment type="cofactor">
    <cofactor evidence="1">
        <name>K(+)</name>
        <dbReference type="ChEBI" id="CHEBI:29103"/>
    </cofactor>
    <text evidence="1">Binds 1 potassium ion per subunit.</text>
</comment>
<comment type="subunit">
    <text evidence="1">Homodimer. Heterotetramer of two MnmE and two MnmG subunits.</text>
</comment>
<comment type="subcellular location">
    <subcellularLocation>
        <location evidence="1">Cytoplasm</location>
    </subcellularLocation>
</comment>
<comment type="similarity">
    <text evidence="1">Belongs to the TRAFAC class TrmE-Era-EngA-EngB-Septin-like GTPase superfamily. TrmE GTPase family.</text>
</comment>